<name>ERPA_SHESA</name>
<proteinExistence type="inferred from homology"/>
<evidence type="ECO:0000255" key="1">
    <source>
        <dbReference type="HAMAP-Rule" id="MF_01380"/>
    </source>
</evidence>
<dbReference type="EMBL" id="CP000469">
    <property type="protein sequence ID" value="ABK49291.1"/>
    <property type="molecule type" value="Genomic_DNA"/>
</dbReference>
<dbReference type="RefSeq" id="WP_011623639.1">
    <property type="nucleotide sequence ID" value="NC_008577.1"/>
</dbReference>
<dbReference type="SMR" id="A0KZS2"/>
<dbReference type="STRING" id="94122.Shewana3_3067"/>
<dbReference type="GeneID" id="94728988"/>
<dbReference type="KEGG" id="shn:Shewana3_3067"/>
<dbReference type="eggNOG" id="COG0316">
    <property type="taxonomic scope" value="Bacteria"/>
</dbReference>
<dbReference type="HOGENOM" id="CLU_069054_5_3_6"/>
<dbReference type="OrthoDB" id="9801228at2"/>
<dbReference type="Proteomes" id="UP000002589">
    <property type="component" value="Chromosome"/>
</dbReference>
<dbReference type="GO" id="GO:0005829">
    <property type="term" value="C:cytosol"/>
    <property type="evidence" value="ECO:0007669"/>
    <property type="project" value="TreeGrafter"/>
</dbReference>
<dbReference type="GO" id="GO:0051537">
    <property type="term" value="F:2 iron, 2 sulfur cluster binding"/>
    <property type="evidence" value="ECO:0007669"/>
    <property type="project" value="UniProtKB-ARBA"/>
</dbReference>
<dbReference type="GO" id="GO:0051539">
    <property type="term" value="F:4 iron, 4 sulfur cluster binding"/>
    <property type="evidence" value="ECO:0007669"/>
    <property type="project" value="TreeGrafter"/>
</dbReference>
<dbReference type="GO" id="GO:0005506">
    <property type="term" value="F:iron ion binding"/>
    <property type="evidence" value="ECO:0007669"/>
    <property type="project" value="UniProtKB-UniRule"/>
</dbReference>
<dbReference type="GO" id="GO:0016226">
    <property type="term" value="P:iron-sulfur cluster assembly"/>
    <property type="evidence" value="ECO:0007669"/>
    <property type="project" value="UniProtKB-UniRule"/>
</dbReference>
<dbReference type="FunFam" id="2.60.300.12:FF:000002">
    <property type="entry name" value="Iron-sulfur cluster insertion protein ErpA"/>
    <property type="match status" value="1"/>
</dbReference>
<dbReference type="Gene3D" id="2.60.300.12">
    <property type="entry name" value="HesB-like domain"/>
    <property type="match status" value="1"/>
</dbReference>
<dbReference type="HAMAP" id="MF_01380">
    <property type="entry name" value="Fe_S_insert_ErpA"/>
    <property type="match status" value="1"/>
</dbReference>
<dbReference type="InterPro" id="IPR000361">
    <property type="entry name" value="FeS_biogenesis"/>
</dbReference>
<dbReference type="InterPro" id="IPR016092">
    <property type="entry name" value="FeS_cluster_insertion"/>
</dbReference>
<dbReference type="InterPro" id="IPR017870">
    <property type="entry name" value="FeS_cluster_insertion_CS"/>
</dbReference>
<dbReference type="InterPro" id="IPR023063">
    <property type="entry name" value="FeS_cluster_insertion_RrpA"/>
</dbReference>
<dbReference type="InterPro" id="IPR035903">
    <property type="entry name" value="HesB-like_dom_sf"/>
</dbReference>
<dbReference type="NCBIfam" id="TIGR00049">
    <property type="entry name" value="iron-sulfur cluster assembly accessory protein"/>
    <property type="match status" value="1"/>
</dbReference>
<dbReference type="NCBIfam" id="NF010147">
    <property type="entry name" value="PRK13623.1"/>
    <property type="match status" value="1"/>
</dbReference>
<dbReference type="PANTHER" id="PTHR43011">
    <property type="entry name" value="IRON-SULFUR CLUSTER ASSEMBLY 2 HOMOLOG, MITOCHONDRIAL"/>
    <property type="match status" value="1"/>
</dbReference>
<dbReference type="PANTHER" id="PTHR43011:SF1">
    <property type="entry name" value="IRON-SULFUR CLUSTER ASSEMBLY 2 HOMOLOG, MITOCHONDRIAL"/>
    <property type="match status" value="1"/>
</dbReference>
<dbReference type="Pfam" id="PF01521">
    <property type="entry name" value="Fe-S_biosyn"/>
    <property type="match status" value="1"/>
</dbReference>
<dbReference type="SUPFAM" id="SSF89360">
    <property type="entry name" value="HesB-like domain"/>
    <property type="match status" value="1"/>
</dbReference>
<dbReference type="PROSITE" id="PS01152">
    <property type="entry name" value="HESB"/>
    <property type="match status" value="1"/>
</dbReference>
<comment type="function">
    <text evidence="1">Required for insertion of 4Fe-4S clusters for at least IspG.</text>
</comment>
<comment type="cofactor">
    <cofactor evidence="1">
        <name>iron-sulfur cluster</name>
        <dbReference type="ChEBI" id="CHEBI:30408"/>
    </cofactor>
    <text evidence="1">Binds 1 iron-sulfur cluster per subunit.</text>
</comment>
<comment type="subunit">
    <text evidence="1">Homodimer.</text>
</comment>
<comment type="similarity">
    <text evidence="1">Belongs to the HesB/IscA family.</text>
</comment>
<feature type="chain" id="PRO_0000311555" description="Iron-sulfur cluster insertion protein ErpA">
    <location>
        <begin position="1"/>
        <end position="116"/>
    </location>
</feature>
<feature type="binding site" evidence="1">
    <location>
        <position position="44"/>
    </location>
    <ligand>
        <name>iron-sulfur cluster</name>
        <dbReference type="ChEBI" id="CHEBI:30408"/>
    </ligand>
</feature>
<feature type="binding site" evidence="1">
    <location>
        <position position="108"/>
    </location>
    <ligand>
        <name>iron-sulfur cluster</name>
        <dbReference type="ChEBI" id="CHEBI:30408"/>
    </ligand>
</feature>
<feature type="binding site" evidence="1">
    <location>
        <position position="110"/>
    </location>
    <ligand>
        <name>iron-sulfur cluster</name>
        <dbReference type="ChEBI" id="CHEBI:30408"/>
    </ligand>
</feature>
<accession>A0KZS2</accession>
<protein>
    <recommendedName>
        <fullName evidence="1">Iron-sulfur cluster insertion protein ErpA</fullName>
    </recommendedName>
</protein>
<organism>
    <name type="scientific">Shewanella sp. (strain ANA-3)</name>
    <dbReference type="NCBI Taxonomy" id="94122"/>
    <lineage>
        <taxon>Bacteria</taxon>
        <taxon>Pseudomonadati</taxon>
        <taxon>Pseudomonadota</taxon>
        <taxon>Gammaproteobacteria</taxon>
        <taxon>Alteromonadales</taxon>
        <taxon>Shewanellaceae</taxon>
        <taxon>Shewanella</taxon>
    </lineage>
</organism>
<gene>
    <name evidence="1" type="primary">erpA</name>
    <name type="ordered locus">Shewana3_3067</name>
</gene>
<sequence length="116" mass="12363">MTDQADAAMPIKFTDAAAAKVKGLLEEEQNPALKLRVYVTGGGCSGFQYGFTFDEKVNEGDFTVEKQGVQLVVDPMSLQYLVGGEVDYTSGLEGSRFFVKNPNATTTCGCGASFSV</sequence>
<keyword id="KW-0408">Iron</keyword>
<keyword id="KW-0411">Iron-sulfur</keyword>
<keyword id="KW-0479">Metal-binding</keyword>
<reference key="1">
    <citation type="submission" date="2006-09" db="EMBL/GenBank/DDBJ databases">
        <title>Complete sequence of chromosome 1 of Shewanella sp. ANA-3.</title>
        <authorList>
            <person name="Copeland A."/>
            <person name="Lucas S."/>
            <person name="Lapidus A."/>
            <person name="Barry K."/>
            <person name="Detter J.C."/>
            <person name="Glavina del Rio T."/>
            <person name="Hammon N."/>
            <person name="Israni S."/>
            <person name="Dalin E."/>
            <person name="Tice H."/>
            <person name="Pitluck S."/>
            <person name="Chertkov O."/>
            <person name="Brettin T."/>
            <person name="Bruce D."/>
            <person name="Han C."/>
            <person name="Tapia R."/>
            <person name="Gilna P."/>
            <person name="Schmutz J."/>
            <person name="Larimer F."/>
            <person name="Land M."/>
            <person name="Hauser L."/>
            <person name="Kyrpides N."/>
            <person name="Kim E."/>
            <person name="Newman D."/>
            <person name="Salticov C."/>
            <person name="Konstantinidis K."/>
            <person name="Klappenback J."/>
            <person name="Tiedje J."/>
            <person name="Richardson P."/>
        </authorList>
    </citation>
    <scope>NUCLEOTIDE SEQUENCE [LARGE SCALE GENOMIC DNA]</scope>
    <source>
        <strain>ANA-3</strain>
    </source>
</reference>